<gene>
    <name type="primary">RAD9A</name>
    <name type="ORF">QtsA-19913</name>
</gene>
<protein>
    <recommendedName>
        <fullName>Cell cycle checkpoint control protein RAD9A</fullName>
        <ecNumber>3.1.11.2</ecNumber>
    </recommendedName>
    <alternativeName>
        <fullName>DNA repair exonuclease rad9 homolog A</fullName>
    </alternativeName>
</protein>
<sequence>MLGKAVHSLSRIGDELYLEPLEDGLSLRTVNSSRSAYACFLFAPLFFQQYQAATPGQDLLRCKILMKSFLSVFRSLAMLEKTVEKCCISLNGRSSRLVVQLHCKFGVRKTHNLSFQDCESLQAVFDPASCPHMLRAPARVLGEAVLPFPPALAEVTLGIGRGRRVILRSYHEEEADSTAKAMVTEMCLGEEDFQQLQAQEGVAITFCLKEFRGLLSFAESANLNLSIHFDAPGRPAIFTIKDSLLDGHFVLATLSDTDSHSQDLGSPERHQPVPQLQAHSIPHPDDFANDDIDSYMIAMETTIGNEGSRVLPSISLSPGPQHPESPGLHSEEDEAEPSTVPGTPPPKKFRSLFFGSILAPARSPQGPSPVLAEDSEGEG</sequence>
<comment type="function">
    <text evidence="2">Component of the 9-1-1 cell-cycle checkpoint response complex that plays a major role in DNA repair. The 9-1-1 complex is recruited to DNA lesion upon damage by the RAD17-replication factor C (RFC) clamp loader complex. Acts then as a sliding clamp platform on DNA for several proteins involved in long-patch base excision repair (LP-BER). The 9-1-1 complex stimulates DNA polymerase beta (POLB) activity by increasing its affinity for the 3'-OH end of the primer-template and stabilizes POLB to those sites where LP-BER proceeds; endonuclease FEN1 cleavage activity on substrates with double, nick, or gap flaps of distinct sequences and lengths; and DNA ligase I (LIG1) on long-patch base excision repair substrates. The 9-1-1 complex is necessary for the recruitment of RHNO1 to sites of double-stranded breaks (DSB) occurring during the S phase. RAD9A possesses 3'-&gt;5' double stranded DNA exonuclease activity.</text>
</comment>
<comment type="catalytic activity">
    <reaction evidence="2">
        <text>Exonucleolytic cleavage in the 3'- to 5'-direction to yield nucleoside 5'-phosphates.</text>
        <dbReference type="EC" id="3.1.11.2"/>
    </reaction>
</comment>
<comment type="subunit">
    <text evidence="2">Component of the toroidal 9-1-1 (RAD9-RAD1-HUS1) complex, composed of RAD9A, RAD1 and HUS1. The 9-1-1 complex associates with LIG1, POLB, FEN1, RAD17, HDAC1, RPA1 and RPA2. The 9-1-1 complex associates with the RAD17-RFC complex. RAD9A interacts with BCL2L1, FEN1, RAD9B, ABL1, RPA1, ATAD5 and RPA2. Interacts with DNAJC7. Interacts (when phosphorylated) with TOPBP1.</text>
</comment>
<comment type="subcellular location">
    <subcellularLocation>
        <location evidence="2">Nucleus</location>
    </subcellularLocation>
</comment>
<comment type="PTM">
    <text evidence="2">Constitutively phosphorylated on serine and threonine amino acids in absence of DNA damage. Hyperphosphorylated by PRKCD and ABL1 upon DNA damage. Its phosphorylation by PRKCD may be required for the formation of the 9-1-1 complex. Phosphorylated at Ser-330 and Ser-375 by CK2, promoting interaction with TOPBP1.</text>
</comment>
<comment type="similarity">
    <text evidence="4">Belongs to the rad9 family.</text>
</comment>
<dbReference type="EC" id="3.1.11.2"/>
<dbReference type="EMBL" id="AB169413">
    <property type="protein sequence ID" value="BAE01496.1"/>
    <property type="molecule type" value="mRNA"/>
</dbReference>
<dbReference type="RefSeq" id="NP_001271905.1">
    <property type="nucleotide sequence ID" value="NM_001284976.1"/>
</dbReference>
<dbReference type="SMR" id="Q4R5X9"/>
<dbReference type="STRING" id="9541.ENSMFAP00000041155"/>
<dbReference type="eggNOG" id="KOG2810">
    <property type="taxonomic scope" value="Eukaryota"/>
</dbReference>
<dbReference type="Proteomes" id="UP000233100">
    <property type="component" value="Unplaced"/>
</dbReference>
<dbReference type="GO" id="GO:0030896">
    <property type="term" value="C:checkpoint clamp complex"/>
    <property type="evidence" value="ECO:0007669"/>
    <property type="project" value="InterPro"/>
</dbReference>
<dbReference type="GO" id="GO:0008311">
    <property type="term" value="F:double-stranded DNA 3'-5' DNA exonuclease activity"/>
    <property type="evidence" value="ECO:0007669"/>
    <property type="project" value="UniProtKB-EC"/>
</dbReference>
<dbReference type="GO" id="GO:0071479">
    <property type="term" value="P:cellular response to ionizing radiation"/>
    <property type="evidence" value="ECO:0007669"/>
    <property type="project" value="TreeGrafter"/>
</dbReference>
<dbReference type="GO" id="GO:0006281">
    <property type="term" value="P:DNA repair"/>
    <property type="evidence" value="ECO:0007669"/>
    <property type="project" value="InterPro"/>
</dbReference>
<dbReference type="GO" id="GO:0000076">
    <property type="term" value="P:DNA replication checkpoint signaling"/>
    <property type="evidence" value="ECO:0007669"/>
    <property type="project" value="TreeGrafter"/>
</dbReference>
<dbReference type="GO" id="GO:0031573">
    <property type="term" value="P:mitotic intra-S DNA damage checkpoint signaling"/>
    <property type="evidence" value="ECO:0007669"/>
    <property type="project" value="TreeGrafter"/>
</dbReference>
<dbReference type="CDD" id="cd00577">
    <property type="entry name" value="PCNA"/>
    <property type="match status" value="1"/>
</dbReference>
<dbReference type="FunFam" id="3.70.10.10:FF:000005">
    <property type="entry name" value="Cell cycle checkpoint control protein"/>
    <property type="match status" value="1"/>
</dbReference>
<dbReference type="Gene3D" id="3.70.10.10">
    <property type="match status" value="1"/>
</dbReference>
<dbReference type="InterPro" id="IPR046938">
    <property type="entry name" value="DNA_clamp_sf"/>
</dbReference>
<dbReference type="InterPro" id="IPR026584">
    <property type="entry name" value="Rad9"/>
</dbReference>
<dbReference type="InterPro" id="IPR007268">
    <property type="entry name" value="Rad9/Ddc1"/>
</dbReference>
<dbReference type="PANTHER" id="PTHR15237:SF1">
    <property type="entry name" value="CELL CYCLE CHECKPOINT CONTROL PROTEIN RAD9A"/>
    <property type="match status" value="1"/>
</dbReference>
<dbReference type="PANTHER" id="PTHR15237">
    <property type="entry name" value="DNA REPAIR PROTEIN RAD9"/>
    <property type="match status" value="1"/>
</dbReference>
<dbReference type="Pfam" id="PF04139">
    <property type="entry name" value="Rad9"/>
    <property type="match status" value="1"/>
</dbReference>
<dbReference type="PIRSF" id="PIRSF009303">
    <property type="entry name" value="Cell_cycle_RAD9"/>
    <property type="match status" value="1"/>
</dbReference>
<dbReference type="SUPFAM" id="SSF55979">
    <property type="entry name" value="DNA clamp"/>
    <property type="match status" value="1"/>
</dbReference>
<reference key="1">
    <citation type="submission" date="2005-06" db="EMBL/GenBank/DDBJ databases">
        <title>DNA sequences of macaque genes expressed in brain or testis and its evolutionary implications.</title>
        <authorList>
            <consortium name="International consortium for macaque cDNA sequencing and analysis"/>
        </authorList>
    </citation>
    <scope>NUCLEOTIDE SEQUENCE [LARGE SCALE MRNA]</scope>
    <source>
        <tissue>Testis</tissue>
    </source>
</reference>
<accession>Q4R5X9</accession>
<feature type="chain" id="PRO_0000225002" description="Cell cycle checkpoint control protein RAD9A">
    <location>
        <begin position="1"/>
        <end position="379"/>
    </location>
</feature>
<feature type="region of interest" description="Possesses 3'-5' exonuclease activity" evidence="1">
    <location>
        <begin position="40"/>
        <end position="80"/>
    </location>
</feature>
<feature type="region of interest" description="Sufficient for interaction with ABL1" evidence="1">
    <location>
        <begin position="255"/>
        <end position="379"/>
    </location>
</feature>
<feature type="region of interest" description="Disordered" evidence="3">
    <location>
        <begin position="257"/>
        <end position="289"/>
    </location>
</feature>
<feature type="region of interest" description="Disordered" evidence="3">
    <location>
        <begin position="308"/>
        <end position="379"/>
    </location>
</feature>
<feature type="compositionally biased region" description="Basic and acidic residues" evidence="3">
    <location>
        <begin position="257"/>
        <end position="271"/>
    </location>
</feature>
<feature type="modified residue" description="Phosphotyrosine" evidence="2">
    <location>
        <position position="17"/>
    </location>
</feature>
<feature type="modified residue" description="Phosphoserine" evidence="2">
    <location>
        <position position="261"/>
    </location>
</feature>
<feature type="modified residue" description="Phosphoserine" evidence="2">
    <location>
        <position position="266"/>
    </location>
</feature>
<feature type="modified residue" description="Phosphoserine" evidence="2">
    <location>
        <position position="317"/>
    </location>
</feature>
<feature type="modified residue" description="Phosphoserine" evidence="2">
    <location>
        <position position="330"/>
    </location>
</feature>
<feature type="modified residue" description="Phosphoserine" evidence="2">
    <location>
        <position position="363"/>
    </location>
</feature>
<feature type="modified residue" description="Phosphoserine" evidence="2">
    <location>
        <position position="368"/>
    </location>
</feature>
<feature type="modified residue" description="Phosphoserine" evidence="2">
    <location>
        <position position="375"/>
    </location>
</feature>
<organism>
    <name type="scientific">Macaca fascicularis</name>
    <name type="common">Crab-eating macaque</name>
    <name type="synonym">Cynomolgus monkey</name>
    <dbReference type="NCBI Taxonomy" id="9541"/>
    <lineage>
        <taxon>Eukaryota</taxon>
        <taxon>Metazoa</taxon>
        <taxon>Chordata</taxon>
        <taxon>Craniata</taxon>
        <taxon>Vertebrata</taxon>
        <taxon>Euteleostomi</taxon>
        <taxon>Mammalia</taxon>
        <taxon>Eutheria</taxon>
        <taxon>Euarchontoglires</taxon>
        <taxon>Primates</taxon>
        <taxon>Haplorrhini</taxon>
        <taxon>Catarrhini</taxon>
        <taxon>Cercopithecidae</taxon>
        <taxon>Cercopithecinae</taxon>
        <taxon>Macaca</taxon>
    </lineage>
</organism>
<name>RAD9A_MACFA</name>
<proteinExistence type="evidence at transcript level"/>
<evidence type="ECO:0000250" key="1"/>
<evidence type="ECO:0000250" key="2">
    <source>
        <dbReference type="UniProtKB" id="Q99638"/>
    </source>
</evidence>
<evidence type="ECO:0000256" key="3">
    <source>
        <dbReference type="SAM" id="MobiDB-lite"/>
    </source>
</evidence>
<evidence type="ECO:0000305" key="4"/>
<keyword id="KW-0227">DNA damage</keyword>
<keyword id="KW-0269">Exonuclease</keyword>
<keyword id="KW-0378">Hydrolase</keyword>
<keyword id="KW-0540">Nuclease</keyword>
<keyword id="KW-0539">Nucleus</keyword>
<keyword id="KW-0597">Phosphoprotein</keyword>
<keyword id="KW-1185">Reference proteome</keyword>